<organism>
    <name type="scientific">Mus musculus</name>
    <name type="common">Mouse</name>
    <dbReference type="NCBI Taxonomy" id="10090"/>
    <lineage>
        <taxon>Eukaryota</taxon>
        <taxon>Metazoa</taxon>
        <taxon>Chordata</taxon>
        <taxon>Craniata</taxon>
        <taxon>Vertebrata</taxon>
        <taxon>Euteleostomi</taxon>
        <taxon>Mammalia</taxon>
        <taxon>Eutheria</taxon>
        <taxon>Euarchontoglires</taxon>
        <taxon>Glires</taxon>
        <taxon>Rodentia</taxon>
        <taxon>Myomorpha</taxon>
        <taxon>Muroidea</taxon>
        <taxon>Muridae</taxon>
        <taxon>Murinae</taxon>
        <taxon>Mus</taxon>
        <taxon>Mus</taxon>
    </lineage>
</organism>
<feature type="chain" id="PRO_0000273051" description="Epithelial splicing regulatory protein 2">
    <location>
        <begin position="1"/>
        <end position="717"/>
    </location>
</feature>
<feature type="domain" description="RRM 1">
    <location>
        <begin position="247"/>
        <end position="343"/>
    </location>
</feature>
<feature type="domain" description="RRM 2">
    <location>
        <begin position="348"/>
        <end position="428"/>
    </location>
</feature>
<feature type="domain" description="RRM 3">
    <location>
        <begin position="465"/>
        <end position="545"/>
    </location>
</feature>
<feature type="region of interest" description="Disordered" evidence="3">
    <location>
        <begin position="1"/>
        <end position="23"/>
    </location>
</feature>
<feature type="compositionally biased region" description="Pro residues" evidence="3">
    <location>
        <begin position="1"/>
        <end position="14"/>
    </location>
</feature>
<feature type="modified residue" description="Phosphoserine" evidence="6 7">
    <location>
        <position position="83"/>
    </location>
</feature>
<feature type="modified residue" description="Phosphoserine" evidence="2">
    <location>
        <position position="563"/>
    </location>
</feature>
<comment type="function">
    <text evidence="1">mRNA splicing factor that regulates the formation of epithelial cell-specific isoforms. Specifically regulates the expression of FGFR2-IIIb, an epithelial cell-specific isoform of FGFR2. Also regulates the splicing of CD44, CTNND1, ENAH, 3 transcripts that undergo changes in splicing during the epithelial-to-mesenchymal transition (EMT). Acts by directly binding specific sequences in mRNAs. Binds the GU-rich sequence motifs in the ISE/ISS-3, a cis-element regulatory region present in the mRNA of FGFR2 (By similarity).</text>
</comment>
<comment type="subunit">
    <text evidence="2">Interacts with RBPMS.</text>
</comment>
<comment type="subcellular location">
    <subcellularLocation>
        <location evidence="1">Nucleus</location>
    </subcellularLocation>
</comment>
<comment type="tissue specificity">
    <text evidence="4">Epithelial cell-specific.</text>
</comment>
<comment type="similarity">
    <text evidence="5">Belongs to the ESRP family.</text>
</comment>
<gene>
    <name type="primary">Esrp2</name>
    <name type="synonym">Rbm35b</name>
</gene>
<accession>Q8K0G8</accession>
<accession>Q8CEK2</accession>
<reference key="1">
    <citation type="journal article" date="2004" name="Genome Res.">
        <title>The status, quality, and expansion of the NIH full-length cDNA project: the Mammalian Gene Collection (MGC).</title>
        <authorList>
            <consortium name="The MGC Project Team"/>
        </authorList>
    </citation>
    <scope>NUCLEOTIDE SEQUENCE [LARGE SCALE MRNA]</scope>
    <source>
        <strain>FVB/N</strain>
        <tissue>Kidney</tissue>
    </source>
</reference>
<reference key="2">
    <citation type="journal article" date="2005" name="Science">
        <title>The transcriptional landscape of the mammalian genome.</title>
        <authorList>
            <person name="Carninci P."/>
            <person name="Kasukawa T."/>
            <person name="Katayama S."/>
            <person name="Gough J."/>
            <person name="Frith M.C."/>
            <person name="Maeda N."/>
            <person name="Oyama R."/>
            <person name="Ravasi T."/>
            <person name="Lenhard B."/>
            <person name="Wells C."/>
            <person name="Kodzius R."/>
            <person name="Shimokawa K."/>
            <person name="Bajic V.B."/>
            <person name="Brenner S.E."/>
            <person name="Batalov S."/>
            <person name="Forrest A.R."/>
            <person name="Zavolan M."/>
            <person name="Davis M.J."/>
            <person name="Wilming L.G."/>
            <person name="Aidinis V."/>
            <person name="Allen J.E."/>
            <person name="Ambesi-Impiombato A."/>
            <person name="Apweiler R."/>
            <person name="Aturaliya R.N."/>
            <person name="Bailey T.L."/>
            <person name="Bansal M."/>
            <person name="Baxter L."/>
            <person name="Beisel K.W."/>
            <person name="Bersano T."/>
            <person name="Bono H."/>
            <person name="Chalk A.M."/>
            <person name="Chiu K.P."/>
            <person name="Choudhary V."/>
            <person name="Christoffels A."/>
            <person name="Clutterbuck D.R."/>
            <person name="Crowe M.L."/>
            <person name="Dalla E."/>
            <person name="Dalrymple B.P."/>
            <person name="de Bono B."/>
            <person name="Della Gatta G."/>
            <person name="di Bernardo D."/>
            <person name="Down T."/>
            <person name="Engstrom P."/>
            <person name="Fagiolini M."/>
            <person name="Faulkner G."/>
            <person name="Fletcher C.F."/>
            <person name="Fukushima T."/>
            <person name="Furuno M."/>
            <person name="Futaki S."/>
            <person name="Gariboldi M."/>
            <person name="Georgii-Hemming P."/>
            <person name="Gingeras T.R."/>
            <person name="Gojobori T."/>
            <person name="Green R.E."/>
            <person name="Gustincich S."/>
            <person name="Harbers M."/>
            <person name="Hayashi Y."/>
            <person name="Hensch T.K."/>
            <person name="Hirokawa N."/>
            <person name="Hill D."/>
            <person name="Huminiecki L."/>
            <person name="Iacono M."/>
            <person name="Ikeo K."/>
            <person name="Iwama A."/>
            <person name="Ishikawa T."/>
            <person name="Jakt M."/>
            <person name="Kanapin A."/>
            <person name="Katoh M."/>
            <person name="Kawasawa Y."/>
            <person name="Kelso J."/>
            <person name="Kitamura H."/>
            <person name="Kitano H."/>
            <person name="Kollias G."/>
            <person name="Krishnan S.P."/>
            <person name="Kruger A."/>
            <person name="Kummerfeld S.K."/>
            <person name="Kurochkin I.V."/>
            <person name="Lareau L.F."/>
            <person name="Lazarevic D."/>
            <person name="Lipovich L."/>
            <person name="Liu J."/>
            <person name="Liuni S."/>
            <person name="McWilliam S."/>
            <person name="Madan Babu M."/>
            <person name="Madera M."/>
            <person name="Marchionni L."/>
            <person name="Matsuda H."/>
            <person name="Matsuzawa S."/>
            <person name="Miki H."/>
            <person name="Mignone F."/>
            <person name="Miyake S."/>
            <person name="Morris K."/>
            <person name="Mottagui-Tabar S."/>
            <person name="Mulder N."/>
            <person name="Nakano N."/>
            <person name="Nakauchi H."/>
            <person name="Ng P."/>
            <person name="Nilsson R."/>
            <person name="Nishiguchi S."/>
            <person name="Nishikawa S."/>
            <person name="Nori F."/>
            <person name="Ohara O."/>
            <person name="Okazaki Y."/>
            <person name="Orlando V."/>
            <person name="Pang K.C."/>
            <person name="Pavan W.J."/>
            <person name="Pavesi G."/>
            <person name="Pesole G."/>
            <person name="Petrovsky N."/>
            <person name="Piazza S."/>
            <person name="Reed J."/>
            <person name="Reid J.F."/>
            <person name="Ring B.Z."/>
            <person name="Ringwald M."/>
            <person name="Rost B."/>
            <person name="Ruan Y."/>
            <person name="Salzberg S.L."/>
            <person name="Sandelin A."/>
            <person name="Schneider C."/>
            <person name="Schoenbach C."/>
            <person name="Sekiguchi K."/>
            <person name="Semple C.A."/>
            <person name="Seno S."/>
            <person name="Sessa L."/>
            <person name="Sheng Y."/>
            <person name="Shibata Y."/>
            <person name="Shimada H."/>
            <person name="Shimada K."/>
            <person name="Silva D."/>
            <person name="Sinclair B."/>
            <person name="Sperling S."/>
            <person name="Stupka E."/>
            <person name="Sugiura K."/>
            <person name="Sultana R."/>
            <person name="Takenaka Y."/>
            <person name="Taki K."/>
            <person name="Tammoja K."/>
            <person name="Tan S.L."/>
            <person name="Tang S."/>
            <person name="Taylor M.S."/>
            <person name="Tegner J."/>
            <person name="Teichmann S.A."/>
            <person name="Ueda H.R."/>
            <person name="van Nimwegen E."/>
            <person name="Verardo R."/>
            <person name="Wei C.L."/>
            <person name="Yagi K."/>
            <person name="Yamanishi H."/>
            <person name="Zabarovsky E."/>
            <person name="Zhu S."/>
            <person name="Zimmer A."/>
            <person name="Hide W."/>
            <person name="Bult C."/>
            <person name="Grimmond S.M."/>
            <person name="Teasdale R.D."/>
            <person name="Liu E.T."/>
            <person name="Brusic V."/>
            <person name="Quackenbush J."/>
            <person name="Wahlestedt C."/>
            <person name="Mattick J.S."/>
            <person name="Hume D.A."/>
            <person name="Kai C."/>
            <person name="Sasaki D."/>
            <person name="Tomaru Y."/>
            <person name="Fukuda S."/>
            <person name="Kanamori-Katayama M."/>
            <person name="Suzuki M."/>
            <person name="Aoki J."/>
            <person name="Arakawa T."/>
            <person name="Iida J."/>
            <person name="Imamura K."/>
            <person name="Itoh M."/>
            <person name="Kato T."/>
            <person name="Kawaji H."/>
            <person name="Kawagashira N."/>
            <person name="Kawashima T."/>
            <person name="Kojima M."/>
            <person name="Kondo S."/>
            <person name="Konno H."/>
            <person name="Nakano K."/>
            <person name="Ninomiya N."/>
            <person name="Nishio T."/>
            <person name="Okada M."/>
            <person name="Plessy C."/>
            <person name="Shibata K."/>
            <person name="Shiraki T."/>
            <person name="Suzuki S."/>
            <person name="Tagami M."/>
            <person name="Waki K."/>
            <person name="Watahiki A."/>
            <person name="Okamura-Oho Y."/>
            <person name="Suzuki H."/>
            <person name="Kawai J."/>
            <person name="Hayashizaki Y."/>
        </authorList>
    </citation>
    <scope>NUCLEOTIDE SEQUENCE [LARGE SCALE MRNA] OF 656-717</scope>
    <source>
        <strain>C57BL/6J</strain>
        <tissue>Urinary bladder</tissue>
    </source>
</reference>
<reference key="3">
    <citation type="journal article" date="2004" name="Nucleic Acids Res.">
        <title>GenePaint.org: an atlas of gene expression patterns in the mouse embryo.</title>
        <authorList>
            <person name="Visel A."/>
            <person name="Thaller C."/>
            <person name="Eichele G."/>
        </authorList>
    </citation>
    <scope>TISSUE SPECIFICITY</scope>
</reference>
<reference key="4">
    <citation type="journal article" date="2007" name="Proc. Natl. Acad. Sci. U.S.A.">
        <title>Large-scale phosphorylation analysis of mouse liver.</title>
        <authorList>
            <person name="Villen J."/>
            <person name="Beausoleil S.A."/>
            <person name="Gerber S.A."/>
            <person name="Gygi S.P."/>
        </authorList>
    </citation>
    <scope>PHOSPHORYLATION [LARGE SCALE ANALYSIS] AT SER-83</scope>
    <scope>IDENTIFICATION BY MASS SPECTROMETRY [LARGE SCALE ANALYSIS]</scope>
    <source>
        <tissue>Liver</tissue>
    </source>
</reference>
<reference key="5">
    <citation type="journal article" date="2010" name="Cell">
        <title>A tissue-specific atlas of mouse protein phosphorylation and expression.</title>
        <authorList>
            <person name="Huttlin E.L."/>
            <person name="Jedrychowski M.P."/>
            <person name="Elias J.E."/>
            <person name="Goswami T."/>
            <person name="Rad R."/>
            <person name="Beausoleil S.A."/>
            <person name="Villen J."/>
            <person name="Haas W."/>
            <person name="Sowa M.E."/>
            <person name="Gygi S.P."/>
        </authorList>
    </citation>
    <scope>PHOSPHORYLATION [LARGE SCALE ANALYSIS] AT SER-83</scope>
    <scope>IDENTIFICATION BY MASS SPECTROMETRY [LARGE SCALE ANALYSIS]</scope>
    <source>
        <tissue>Pancreas</tissue>
    </source>
</reference>
<protein>
    <recommendedName>
        <fullName>Epithelial splicing regulatory protein 2</fullName>
    </recommendedName>
    <alternativeName>
        <fullName>RNA-binding motif protein 35B</fullName>
    </alternativeName>
    <alternativeName>
        <fullName>RNA-binding protein 35B</fullName>
    </alternativeName>
</protein>
<sequence length="717" mass="77361">MTPPPPPPPPPGPDPAVDSATDPCPEPQSLVVLFGATAGALGPDLGSDETDLILLVWQVVEPRSRQVGTLHKSLVRAEAAALSPQCREASGLSADSLARAESLDKVLQQFSQLVSGDVALLGGGPYVLCTDGQQLLRQVLHPEASRKNLVLPDTFFSFYDLRREFHMQHPSTCSARDLTVGTMAQDLGLETDATEDDFGVWEVKTMVAVILHLLEGSNGQLFSKPEVVKQKYETGPCSKADVVDNETVVRARGLPWQSSDQDVARFFKGLNIARGGVALCLNAQGRRNGEALIRFVDSEQRDLALQRHKHHMGVRYIEVYKATGEEFVKIAGGTSLEVARFLSREDQVILRLRGLPFSAGPTDVLGFLGPECPVTGGADGLLFVRHPDGRPTGDAFALFACEELAQAALRRHKGMLGKRYIELFRSTAAEVQQVLNRYAASPLLPTLTAPLLPIPFPLAGGTGRDCVRLRGLPYTATIEDILSFLGEAAADIRPHGVHMVLNQQGRPSGDAFIQMMSVERALAAAQRCHKKMMKERYVEVVPCSTEEMSRVLMGGSLSRSGLSPPPCKLPCLSPPTYATFQATPALIPTETTALYPSSALLPAARVPAAATPLAYYPGPATQLYMNYTAYYPSPPVSPTTVGYLTTPPTALASTPTTMLSQPGALVRMQGVPYTAGMKDLLSVFQAYQLAPDDYTTLMPVGDPPRTVLQAPKEWVCL</sequence>
<keyword id="KW-0507">mRNA processing</keyword>
<keyword id="KW-0508">mRNA splicing</keyword>
<keyword id="KW-0539">Nucleus</keyword>
<keyword id="KW-0597">Phosphoprotein</keyword>
<keyword id="KW-1185">Reference proteome</keyword>
<keyword id="KW-0677">Repeat</keyword>
<keyword id="KW-0694">RNA-binding</keyword>
<name>ESRP2_MOUSE</name>
<dbReference type="EMBL" id="BC031444">
    <property type="protein sequence ID" value="AAH31444.1"/>
    <property type="molecule type" value="mRNA"/>
</dbReference>
<dbReference type="EMBL" id="AK020578">
    <property type="protein sequence ID" value="BAC25635.1"/>
    <property type="molecule type" value="mRNA"/>
</dbReference>
<dbReference type="CCDS" id="CCDS22629.1"/>
<dbReference type="RefSeq" id="NP_789808.1">
    <property type="nucleotide sequence ID" value="NM_176838.2"/>
</dbReference>
<dbReference type="SMR" id="Q8K0G8"/>
<dbReference type="FunCoup" id="Q8K0G8">
    <property type="interactions" value="542"/>
</dbReference>
<dbReference type="IntAct" id="Q8K0G8">
    <property type="interactions" value="1"/>
</dbReference>
<dbReference type="STRING" id="10090.ENSMUSP00000111639"/>
<dbReference type="GlyGen" id="Q8K0G8">
    <property type="glycosylation" value="2 sites"/>
</dbReference>
<dbReference type="iPTMnet" id="Q8K0G8"/>
<dbReference type="PhosphoSitePlus" id="Q8K0G8"/>
<dbReference type="SwissPalm" id="Q8K0G8"/>
<dbReference type="PaxDb" id="10090-ENSMUSP00000111639"/>
<dbReference type="ProteomicsDB" id="275689"/>
<dbReference type="Antibodypedia" id="29741">
    <property type="antibodies" value="197 antibodies from 30 providers"/>
</dbReference>
<dbReference type="DNASU" id="77411"/>
<dbReference type="Ensembl" id="ENSMUST00000115979.9">
    <property type="protein sequence ID" value="ENSMUSP00000111639.3"/>
    <property type="gene ID" value="ENSMUSG00000084128.11"/>
</dbReference>
<dbReference type="GeneID" id="77411"/>
<dbReference type="KEGG" id="mmu:77411"/>
<dbReference type="UCSC" id="uc009nff.1">
    <property type="organism name" value="mouse"/>
</dbReference>
<dbReference type="AGR" id="MGI:1924661"/>
<dbReference type="CTD" id="80004"/>
<dbReference type="MGI" id="MGI:1924661">
    <property type="gene designation" value="Esrp2"/>
</dbReference>
<dbReference type="VEuPathDB" id="HostDB:ENSMUSG00000084128"/>
<dbReference type="eggNOG" id="KOG1365">
    <property type="taxonomic scope" value="Eukaryota"/>
</dbReference>
<dbReference type="GeneTree" id="ENSGT00940000157187"/>
<dbReference type="InParanoid" id="Q8K0G8"/>
<dbReference type="OMA" id="VQHPSAC"/>
<dbReference type="OrthoDB" id="431068at2759"/>
<dbReference type="PhylomeDB" id="Q8K0G8"/>
<dbReference type="TreeFam" id="TF316157"/>
<dbReference type="BioGRID-ORCS" id="77411">
    <property type="hits" value="7 hits in 77 CRISPR screens"/>
</dbReference>
<dbReference type="ChiTaRS" id="Esrp2">
    <property type="organism name" value="mouse"/>
</dbReference>
<dbReference type="PRO" id="PR:Q8K0G8"/>
<dbReference type="Proteomes" id="UP000000589">
    <property type="component" value="Chromosome 8"/>
</dbReference>
<dbReference type="RNAct" id="Q8K0G8">
    <property type="molecule type" value="protein"/>
</dbReference>
<dbReference type="Bgee" id="ENSMUSG00000084128">
    <property type="expression patterns" value="Expressed in lip and 177 other cell types or tissues"/>
</dbReference>
<dbReference type="ExpressionAtlas" id="Q8K0G8">
    <property type="expression patterns" value="baseline and differential"/>
</dbReference>
<dbReference type="GO" id="GO:0005654">
    <property type="term" value="C:nucleoplasm"/>
    <property type="evidence" value="ECO:0007669"/>
    <property type="project" value="Ensembl"/>
</dbReference>
<dbReference type="GO" id="GO:0005634">
    <property type="term" value="C:nucleus"/>
    <property type="evidence" value="ECO:0000250"/>
    <property type="project" value="UniProtKB"/>
</dbReference>
<dbReference type="GO" id="GO:0003729">
    <property type="term" value="F:mRNA binding"/>
    <property type="evidence" value="ECO:0000250"/>
    <property type="project" value="UniProtKB"/>
</dbReference>
<dbReference type="GO" id="GO:0000380">
    <property type="term" value="P:alternative mRNA splicing, via spliceosome"/>
    <property type="evidence" value="ECO:0000316"/>
    <property type="project" value="MGI"/>
</dbReference>
<dbReference type="GO" id="GO:0060445">
    <property type="term" value="P:branching involved in salivary gland morphogenesis"/>
    <property type="evidence" value="ECO:0000316"/>
    <property type="project" value="MGI"/>
</dbReference>
<dbReference type="GO" id="GO:0050673">
    <property type="term" value="P:epithelial cell proliferation"/>
    <property type="evidence" value="ECO:0000316"/>
    <property type="project" value="MGI"/>
</dbReference>
<dbReference type="GO" id="GO:0060441">
    <property type="term" value="P:epithelial tube branching involved in lung morphogenesis"/>
    <property type="evidence" value="ECO:0000316"/>
    <property type="project" value="MGI"/>
</dbReference>
<dbReference type="GO" id="GO:0050679">
    <property type="term" value="P:positive regulation of epithelial cell proliferation"/>
    <property type="evidence" value="ECO:0000316"/>
    <property type="project" value="MGI"/>
</dbReference>
<dbReference type="GO" id="GO:0043484">
    <property type="term" value="P:regulation of RNA splicing"/>
    <property type="evidence" value="ECO:0000250"/>
    <property type="project" value="UniProtKB"/>
</dbReference>
<dbReference type="CDD" id="cd12742">
    <property type="entry name" value="RRM3_ESRP1_ESRP2"/>
    <property type="match status" value="1"/>
</dbReference>
<dbReference type="FunFam" id="3.30.70.330:FF:000041">
    <property type="entry name" value="Epithelial splicing regulatory protein 1"/>
    <property type="match status" value="1"/>
</dbReference>
<dbReference type="FunFam" id="3.30.70.330:FF:000070">
    <property type="entry name" value="Epithelial splicing regulatory protein 1"/>
    <property type="match status" value="1"/>
</dbReference>
<dbReference type="FunFam" id="3.30.70.330:FF:000056">
    <property type="entry name" value="epithelial splicing regulatory protein 1 isoform X1"/>
    <property type="match status" value="1"/>
</dbReference>
<dbReference type="FunFam" id="3.30.420.10:FF:000037">
    <property type="entry name" value="epithelial splicing regulatory protein 2 isoform X1"/>
    <property type="match status" value="1"/>
</dbReference>
<dbReference type="Gene3D" id="3.30.70.330">
    <property type="match status" value="3"/>
</dbReference>
<dbReference type="Gene3D" id="3.30.420.10">
    <property type="entry name" value="Ribonuclease H-like superfamily/Ribonuclease H"/>
    <property type="match status" value="1"/>
</dbReference>
<dbReference type="InterPro" id="IPR050666">
    <property type="entry name" value="ESRP"/>
</dbReference>
<dbReference type="InterPro" id="IPR012677">
    <property type="entry name" value="Nucleotide-bd_a/b_plait_sf"/>
</dbReference>
<dbReference type="InterPro" id="IPR035979">
    <property type="entry name" value="RBD_domain_sf"/>
</dbReference>
<dbReference type="InterPro" id="IPR012337">
    <property type="entry name" value="RNaseH-like_sf"/>
</dbReference>
<dbReference type="InterPro" id="IPR036397">
    <property type="entry name" value="RNaseH_sf"/>
</dbReference>
<dbReference type="InterPro" id="IPR000504">
    <property type="entry name" value="RRM_dom"/>
</dbReference>
<dbReference type="PANTHER" id="PTHR13976">
    <property type="entry name" value="HETEROGENEOUS NUCLEAR RIBONUCLEOPROTEIN-RELATED"/>
    <property type="match status" value="1"/>
</dbReference>
<dbReference type="SMART" id="SM00360">
    <property type="entry name" value="RRM"/>
    <property type="match status" value="3"/>
</dbReference>
<dbReference type="SUPFAM" id="SSF53098">
    <property type="entry name" value="Ribonuclease H-like"/>
    <property type="match status" value="1"/>
</dbReference>
<dbReference type="SUPFAM" id="SSF54928">
    <property type="entry name" value="RNA-binding domain, RBD"/>
    <property type="match status" value="3"/>
</dbReference>
<proteinExistence type="evidence at protein level"/>
<evidence type="ECO:0000250" key="1"/>
<evidence type="ECO:0000250" key="2">
    <source>
        <dbReference type="UniProtKB" id="Q9H6T0"/>
    </source>
</evidence>
<evidence type="ECO:0000256" key="3">
    <source>
        <dbReference type="SAM" id="MobiDB-lite"/>
    </source>
</evidence>
<evidence type="ECO:0000269" key="4">
    <source>
    </source>
</evidence>
<evidence type="ECO:0000305" key="5"/>
<evidence type="ECO:0007744" key="6">
    <source>
    </source>
</evidence>
<evidence type="ECO:0007744" key="7">
    <source>
    </source>
</evidence>